<gene>
    <name type="primary">yoaD</name>
    <name type="ordered locus">BSU18560</name>
</gene>
<protein>
    <recommendedName>
        <fullName>Putative 2-hydroxyacid dehydrogenase YoaD</fullName>
        <ecNumber>1.1.1.-</ecNumber>
    </recommendedName>
</protein>
<reference key="1">
    <citation type="submission" date="1997-10" db="EMBL/GenBank/DDBJ databases">
        <title>Sequence analysis of the Bacillus subtilis chromosome region between the terC and odhAB loci cloned in a yeast artificial chromosome.</title>
        <authorList>
            <person name="Lapidus A."/>
            <person name="Galleron N."/>
            <person name="Sorokin A."/>
            <person name="Ehrlich D."/>
        </authorList>
    </citation>
    <scope>NUCLEOTIDE SEQUENCE [GENOMIC DNA]</scope>
</reference>
<reference key="2">
    <citation type="journal article" date="1997" name="Nature">
        <title>The complete genome sequence of the Gram-positive bacterium Bacillus subtilis.</title>
        <authorList>
            <person name="Kunst F."/>
            <person name="Ogasawara N."/>
            <person name="Moszer I."/>
            <person name="Albertini A.M."/>
            <person name="Alloni G."/>
            <person name="Azevedo V."/>
            <person name="Bertero M.G."/>
            <person name="Bessieres P."/>
            <person name="Bolotin A."/>
            <person name="Borchert S."/>
            <person name="Borriss R."/>
            <person name="Boursier L."/>
            <person name="Brans A."/>
            <person name="Braun M."/>
            <person name="Brignell S.C."/>
            <person name="Bron S."/>
            <person name="Brouillet S."/>
            <person name="Bruschi C.V."/>
            <person name="Caldwell B."/>
            <person name="Capuano V."/>
            <person name="Carter N.M."/>
            <person name="Choi S.-K."/>
            <person name="Codani J.-J."/>
            <person name="Connerton I.F."/>
            <person name="Cummings N.J."/>
            <person name="Daniel R.A."/>
            <person name="Denizot F."/>
            <person name="Devine K.M."/>
            <person name="Duesterhoeft A."/>
            <person name="Ehrlich S.D."/>
            <person name="Emmerson P.T."/>
            <person name="Entian K.-D."/>
            <person name="Errington J."/>
            <person name="Fabret C."/>
            <person name="Ferrari E."/>
            <person name="Foulger D."/>
            <person name="Fritz C."/>
            <person name="Fujita M."/>
            <person name="Fujita Y."/>
            <person name="Fuma S."/>
            <person name="Galizzi A."/>
            <person name="Galleron N."/>
            <person name="Ghim S.-Y."/>
            <person name="Glaser P."/>
            <person name="Goffeau A."/>
            <person name="Golightly E.J."/>
            <person name="Grandi G."/>
            <person name="Guiseppi G."/>
            <person name="Guy B.J."/>
            <person name="Haga K."/>
            <person name="Haiech J."/>
            <person name="Harwood C.R."/>
            <person name="Henaut A."/>
            <person name="Hilbert H."/>
            <person name="Holsappel S."/>
            <person name="Hosono S."/>
            <person name="Hullo M.-F."/>
            <person name="Itaya M."/>
            <person name="Jones L.-M."/>
            <person name="Joris B."/>
            <person name="Karamata D."/>
            <person name="Kasahara Y."/>
            <person name="Klaerr-Blanchard M."/>
            <person name="Klein C."/>
            <person name="Kobayashi Y."/>
            <person name="Koetter P."/>
            <person name="Koningstein G."/>
            <person name="Krogh S."/>
            <person name="Kumano M."/>
            <person name="Kurita K."/>
            <person name="Lapidus A."/>
            <person name="Lardinois S."/>
            <person name="Lauber J."/>
            <person name="Lazarevic V."/>
            <person name="Lee S.-M."/>
            <person name="Levine A."/>
            <person name="Liu H."/>
            <person name="Masuda S."/>
            <person name="Mauel C."/>
            <person name="Medigue C."/>
            <person name="Medina N."/>
            <person name="Mellado R.P."/>
            <person name="Mizuno M."/>
            <person name="Moestl D."/>
            <person name="Nakai S."/>
            <person name="Noback M."/>
            <person name="Noone D."/>
            <person name="O'Reilly M."/>
            <person name="Ogawa K."/>
            <person name="Ogiwara A."/>
            <person name="Oudega B."/>
            <person name="Park S.-H."/>
            <person name="Parro V."/>
            <person name="Pohl T.M."/>
            <person name="Portetelle D."/>
            <person name="Porwollik S."/>
            <person name="Prescott A.M."/>
            <person name="Presecan E."/>
            <person name="Pujic P."/>
            <person name="Purnelle B."/>
            <person name="Rapoport G."/>
            <person name="Rey M."/>
            <person name="Reynolds S."/>
            <person name="Rieger M."/>
            <person name="Rivolta C."/>
            <person name="Rocha E."/>
            <person name="Roche B."/>
            <person name="Rose M."/>
            <person name="Sadaie Y."/>
            <person name="Sato T."/>
            <person name="Scanlan E."/>
            <person name="Schleich S."/>
            <person name="Schroeter R."/>
            <person name="Scoffone F."/>
            <person name="Sekiguchi J."/>
            <person name="Sekowska A."/>
            <person name="Seror S.J."/>
            <person name="Serror P."/>
            <person name="Shin B.-S."/>
            <person name="Soldo B."/>
            <person name="Sorokin A."/>
            <person name="Tacconi E."/>
            <person name="Takagi T."/>
            <person name="Takahashi H."/>
            <person name="Takemaru K."/>
            <person name="Takeuchi M."/>
            <person name="Tamakoshi A."/>
            <person name="Tanaka T."/>
            <person name="Terpstra P."/>
            <person name="Tognoni A."/>
            <person name="Tosato V."/>
            <person name="Uchiyama S."/>
            <person name="Vandenbol M."/>
            <person name="Vannier F."/>
            <person name="Vassarotti A."/>
            <person name="Viari A."/>
            <person name="Wambutt R."/>
            <person name="Wedler E."/>
            <person name="Wedler H."/>
            <person name="Weitzenegger T."/>
            <person name="Winters P."/>
            <person name="Wipat A."/>
            <person name="Yamamoto H."/>
            <person name="Yamane K."/>
            <person name="Yasumoto K."/>
            <person name="Yata K."/>
            <person name="Yoshida K."/>
            <person name="Yoshikawa H.-F."/>
            <person name="Zumstein E."/>
            <person name="Yoshikawa H."/>
            <person name="Danchin A."/>
        </authorList>
    </citation>
    <scope>NUCLEOTIDE SEQUENCE [LARGE SCALE GENOMIC DNA]</scope>
    <source>
        <strain>168</strain>
    </source>
</reference>
<reference key="3">
    <citation type="journal article" date="2002" name="J. Bacteriol.">
        <title>Global expression profile of Bacillus subtilis grown in the presence of sulfate or methionine.</title>
        <authorList>
            <person name="Auger S."/>
            <person name="Danchin A."/>
            <person name="Martin-Verstraete I."/>
        </authorList>
    </citation>
    <scope>INDUCTION</scope>
    <scope>OPERON STRUCTURE</scope>
    <source>
        <strain>168</strain>
    </source>
</reference>
<organism>
    <name type="scientific">Bacillus subtilis (strain 168)</name>
    <dbReference type="NCBI Taxonomy" id="224308"/>
    <lineage>
        <taxon>Bacteria</taxon>
        <taxon>Bacillati</taxon>
        <taxon>Bacillota</taxon>
        <taxon>Bacilli</taxon>
        <taxon>Bacillales</taxon>
        <taxon>Bacillaceae</taxon>
        <taxon>Bacillus</taxon>
    </lineage>
</organism>
<feature type="chain" id="PRO_0000386538" description="Putative 2-hydroxyacid dehydrogenase YoaD">
    <location>
        <begin position="1"/>
        <end position="344"/>
    </location>
</feature>
<feature type="active site" evidence="1">
    <location>
        <position position="251"/>
    </location>
</feature>
<feature type="active site" evidence="1">
    <location>
        <position position="280"/>
    </location>
</feature>
<feature type="active site" description="Proton donor" evidence="1">
    <location>
        <position position="300"/>
    </location>
</feature>
<feature type="binding site" evidence="1">
    <location>
        <position position="193"/>
    </location>
    <ligand>
        <name>NAD(+)</name>
        <dbReference type="ChEBI" id="CHEBI:57540"/>
    </ligand>
</feature>
<feature type="binding site" evidence="1">
    <location>
        <position position="275"/>
    </location>
    <ligand>
        <name>NAD(+)</name>
        <dbReference type="ChEBI" id="CHEBI:57540"/>
    </ligand>
</feature>
<keyword id="KW-0520">NAD</keyword>
<keyword id="KW-0560">Oxidoreductase</keyword>
<keyword id="KW-1185">Reference proteome</keyword>
<name>YOAD_BACSU</name>
<comment type="induction">
    <text evidence="2">Induced by sulfate, part of the yoaDCB operon.</text>
</comment>
<comment type="similarity">
    <text evidence="3">Belongs to the D-isomer specific 2-hydroxyacid dehydrogenase family.</text>
</comment>
<evidence type="ECO:0000255" key="1"/>
<evidence type="ECO:0000269" key="2">
    <source>
    </source>
</evidence>
<evidence type="ECO:0000305" key="3"/>
<dbReference type="EC" id="1.1.1.-"/>
<dbReference type="EMBL" id="AF027868">
    <property type="protein sequence ID" value="AAB84446.1"/>
    <property type="molecule type" value="Genomic_DNA"/>
</dbReference>
<dbReference type="EMBL" id="AL009126">
    <property type="protein sequence ID" value="CAB13749.1"/>
    <property type="molecule type" value="Genomic_DNA"/>
</dbReference>
<dbReference type="PIR" id="F69895">
    <property type="entry name" value="F69895"/>
</dbReference>
<dbReference type="RefSeq" id="NP_389738.1">
    <property type="nucleotide sequence ID" value="NC_000964.3"/>
</dbReference>
<dbReference type="RefSeq" id="WP_009967372.1">
    <property type="nucleotide sequence ID" value="NZ_OZ025638.1"/>
</dbReference>
<dbReference type="SMR" id="O34815"/>
<dbReference type="FunCoup" id="O34815">
    <property type="interactions" value="234"/>
</dbReference>
<dbReference type="STRING" id="224308.BSU18560"/>
<dbReference type="PaxDb" id="224308-BSU18560"/>
<dbReference type="EnsemblBacteria" id="CAB13749">
    <property type="protein sequence ID" value="CAB13749"/>
    <property type="gene ID" value="BSU_18560"/>
</dbReference>
<dbReference type="GeneID" id="940109"/>
<dbReference type="KEGG" id="bsu:BSU18560"/>
<dbReference type="PATRIC" id="fig|224308.179.peg.2023"/>
<dbReference type="eggNOG" id="COG0111">
    <property type="taxonomic scope" value="Bacteria"/>
</dbReference>
<dbReference type="InParanoid" id="O34815"/>
<dbReference type="OrthoDB" id="9805416at2"/>
<dbReference type="PhylomeDB" id="O34815"/>
<dbReference type="BioCyc" id="BSUB:BSU18560-MONOMER"/>
<dbReference type="Proteomes" id="UP000001570">
    <property type="component" value="Chromosome"/>
</dbReference>
<dbReference type="GO" id="GO:0051287">
    <property type="term" value="F:NAD binding"/>
    <property type="evidence" value="ECO:0007669"/>
    <property type="project" value="InterPro"/>
</dbReference>
<dbReference type="GO" id="GO:0004617">
    <property type="term" value="F:phosphoglycerate dehydrogenase activity"/>
    <property type="evidence" value="ECO:0000318"/>
    <property type="project" value="GO_Central"/>
</dbReference>
<dbReference type="GO" id="GO:0006564">
    <property type="term" value="P:L-serine biosynthetic process"/>
    <property type="evidence" value="ECO:0000318"/>
    <property type="project" value="GO_Central"/>
</dbReference>
<dbReference type="CDD" id="cd12171">
    <property type="entry name" value="2-Hacid_dh_10"/>
    <property type="match status" value="1"/>
</dbReference>
<dbReference type="FunFam" id="3.40.50.720:FF:000041">
    <property type="entry name" value="D-3-phosphoglycerate dehydrogenase"/>
    <property type="match status" value="1"/>
</dbReference>
<dbReference type="Gene3D" id="3.40.50.720">
    <property type="entry name" value="NAD(P)-binding Rossmann-like Domain"/>
    <property type="match status" value="2"/>
</dbReference>
<dbReference type="InterPro" id="IPR050418">
    <property type="entry name" value="D-iso_2-hydroxyacid_DH_PdxB"/>
</dbReference>
<dbReference type="InterPro" id="IPR006139">
    <property type="entry name" value="D-isomer_2_OHA_DH_cat_dom"/>
</dbReference>
<dbReference type="InterPro" id="IPR029753">
    <property type="entry name" value="D-isomer_DH_CS"/>
</dbReference>
<dbReference type="InterPro" id="IPR006140">
    <property type="entry name" value="D-isomer_DH_NAD-bd"/>
</dbReference>
<dbReference type="InterPro" id="IPR036291">
    <property type="entry name" value="NAD(P)-bd_dom_sf"/>
</dbReference>
<dbReference type="PANTHER" id="PTHR43761:SF1">
    <property type="entry name" value="D-ISOMER SPECIFIC 2-HYDROXYACID DEHYDROGENASE CATALYTIC DOMAIN-CONTAINING PROTEIN-RELATED"/>
    <property type="match status" value="1"/>
</dbReference>
<dbReference type="PANTHER" id="PTHR43761">
    <property type="entry name" value="D-ISOMER SPECIFIC 2-HYDROXYACID DEHYDROGENASE FAMILY PROTEIN (AFU_ORTHOLOGUE AFUA_1G13630)"/>
    <property type="match status" value="1"/>
</dbReference>
<dbReference type="Pfam" id="PF00389">
    <property type="entry name" value="2-Hacid_dh"/>
    <property type="match status" value="1"/>
</dbReference>
<dbReference type="Pfam" id="PF02826">
    <property type="entry name" value="2-Hacid_dh_C"/>
    <property type="match status" value="1"/>
</dbReference>
<dbReference type="SUPFAM" id="SSF52283">
    <property type="entry name" value="Formate/glycerate dehydrogenase catalytic domain-like"/>
    <property type="match status" value="1"/>
</dbReference>
<dbReference type="SUPFAM" id="SSF51735">
    <property type="entry name" value="NAD(P)-binding Rossmann-fold domains"/>
    <property type="match status" value="1"/>
</dbReference>
<dbReference type="PROSITE" id="PS00670">
    <property type="entry name" value="D_2_HYDROXYACID_DH_2"/>
    <property type="match status" value="1"/>
</dbReference>
<proteinExistence type="evidence at transcript level"/>
<sequence>MKNTMKRMFCSMTVLVTAPYNEEGRKELENLFGSVAYQSWKEQGRAYREDELIQLLKATNATGLITELDQVTDSVFASVPELSFVGVCRGMPSNVDVAAASKRGIPVFYTPGRNAQAVAEMFIGNVISFLRHTSASNQWLKDGEWDSDYLQAYVKFKGNELTGKTVGMIGFGAVGQRIAKLLTAFDCKIKYYDPYIQDDHPLYEKASLKTVFSDSDIVSVHLPRTEETLGLIDRQYFDLMKESAIFVNTSRAVVVNREDLLFVLKEHKISGAILDVFYHEPPEESDYELISLPNVLATPHLAGATFEVEDHHVTILNKALKKWKGEKTLNIQTMYNKDALKTGG</sequence>
<accession>O34815</accession>
<accession>Q796G0</accession>